<gene>
    <name evidence="1" type="primary">trpC</name>
    <name type="ordered locus">PHZ_c1761</name>
</gene>
<dbReference type="EC" id="4.1.1.48" evidence="1"/>
<dbReference type="EMBL" id="CP000747">
    <property type="protein sequence ID" value="ACG78172.1"/>
    <property type="molecule type" value="Genomic_DNA"/>
</dbReference>
<dbReference type="RefSeq" id="WP_012522314.1">
    <property type="nucleotide sequence ID" value="NC_011144.1"/>
</dbReference>
<dbReference type="SMR" id="B4RBX5"/>
<dbReference type="STRING" id="450851.PHZ_c1761"/>
<dbReference type="KEGG" id="pzu:PHZ_c1761"/>
<dbReference type="eggNOG" id="COG0134">
    <property type="taxonomic scope" value="Bacteria"/>
</dbReference>
<dbReference type="HOGENOM" id="CLU_034247_2_0_5"/>
<dbReference type="OrthoDB" id="9804217at2"/>
<dbReference type="UniPathway" id="UPA00035">
    <property type="reaction ID" value="UER00043"/>
</dbReference>
<dbReference type="Proteomes" id="UP000001868">
    <property type="component" value="Chromosome"/>
</dbReference>
<dbReference type="GO" id="GO:0004425">
    <property type="term" value="F:indole-3-glycerol-phosphate synthase activity"/>
    <property type="evidence" value="ECO:0007669"/>
    <property type="project" value="UniProtKB-UniRule"/>
</dbReference>
<dbReference type="GO" id="GO:0004640">
    <property type="term" value="F:phosphoribosylanthranilate isomerase activity"/>
    <property type="evidence" value="ECO:0007669"/>
    <property type="project" value="TreeGrafter"/>
</dbReference>
<dbReference type="GO" id="GO:0000162">
    <property type="term" value="P:L-tryptophan biosynthetic process"/>
    <property type="evidence" value="ECO:0007669"/>
    <property type="project" value="UniProtKB-UniRule"/>
</dbReference>
<dbReference type="CDD" id="cd00331">
    <property type="entry name" value="IGPS"/>
    <property type="match status" value="1"/>
</dbReference>
<dbReference type="FunFam" id="3.20.20.70:FF:000024">
    <property type="entry name" value="Indole-3-glycerol phosphate synthase"/>
    <property type="match status" value="1"/>
</dbReference>
<dbReference type="Gene3D" id="3.20.20.70">
    <property type="entry name" value="Aldolase class I"/>
    <property type="match status" value="1"/>
</dbReference>
<dbReference type="HAMAP" id="MF_00134_B">
    <property type="entry name" value="IGPS_B"/>
    <property type="match status" value="1"/>
</dbReference>
<dbReference type="InterPro" id="IPR013785">
    <property type="entry name" value="Aldolase_TIM"/>
</dbReference>
<dbReference type="InterPro" id="IPR045186">
    <property type="entry name" value="Indole-3-glycerol_P_synth"/>
</dbReference>
<dbReference type="InterPro" id="IPR013798">
    <property type="entry name" value="Indole-3-glycerol_P_synth_dom"/>
</dbReference>
<dbReference type="InterPro" id="IPR001468">
    <property type="entry name" value="Indole-3-GlycerolPSynthase_CS"/>
</dbReference>
<dbReference type="InterPro" id="IPR011060">
    <property type="entry name" value="RibuloseP-bd_barrel"/>
</dbReference>
<dbReference type="NCBIfam" id="NF001370">
    <property type="entry name" value="PRK00278.1-2"/>
    <property type="match status" value="1"/>
</dbReference>
<dbReference type="NCBIfam" id="NF001377">
    <property type="entry name" value="PRK00278.2-4"/>
    <property type="match status" value="1"/>
</dbReference>
<dbReference type="PANTHER" id="PTHR22854:SF2">
    <property type="entry name" value="INDOLE-3-GLYCEROL-PHOSPHATE SYNTHASE"/>
    <property type="match status" value="1"/>
</dbReference>
<dbReference type="PANTHER" id="PTHR22854">
    <property type="entry name" value="TRYPTOPHAN BIOSYNTHESIS PROTEIN"/>
    <property type="match status" value="1"/>
</dbReference>
<dbReference type="Pfam" id="PF00218">
    <property type="entry name" value="IGPS"/>
    <property type="match status" value="1"/>
</dbReference>
<dbReference type="SUPFAM" id="SSF51366">
    <property type="entry name" value="Ribulose-phoshate binding barrel"/>
    <property type="match status" value="1"/>
</dbReference>
<dbReference type="PROSITE" id="PS00614">
    <property type="entry name" value="IGPS"/>
    <property type="match status" value="1"/>
</dbReference>
<name>TRPC_PHEZH</name>
<feature type="chain" id="PRO_1000095878" description="Indole-3-glycerol phosphate synthase">
    <location>
        <begin position="1"/>
        <end position="257"/>
    </location>
</feature>
<proteinExistence type="inferred from homology"/>
<reference key="1">
    <citation type="journal article" date="2008" name="BMC Genomics">
        <title>Complete genome of Phenylobacterium zucineum - a novel facultative intracellular bacterium isolated from human erythroleukemia cell line K562.</title>
        <authorList>
            <person name="Luo Y."/>
            <person name="Xu X."/>
            <person name="Ding Z."/>
            <person name="Liu Z."/>
            <person name="Zhang B."/>
            <person name="Yan Z."/>
            <person name="Sun J."/>
            <person name="Hu S."/>
            <person name="Hu X."/>
        </authorList>
    </citation>
    <scope>NUCLEOTIDE SEQUENCE [LARGE SCALE GENOMIC DNA]</scope>
    <source>
        <strain>HLK1</strain>
    </source>
</reference>
<keyword id="KW-0028">Amino-acid biosynthesis</keyword>
<keyword id="KW-0057">Aromatic amino acid biosynthesis</keyword>
<keyword id="KW-0210">Decarboxylase</keyword>
<keyword id="KW-0456">Lyase</keyword>
<keyword id="KW-1185">Reference proteome</keyword>
<keyword id="KW-0822">Tryptophan biosynthesis</keyword>
<organism>
    <name type="scientific">Phenylobacterium zucineum (strain HLK1)</name>
    <dbReference type="NCBI Taxonomy" id="450851"/>
    <lineage>
        <taxon>Bacteria</taxon>
        <taxon>Pseudomonadati</taxon>
        <taxon>Pseudomonadota</taxon>
        <taxon>Alphaproteobacteria</taxon>
        <taxon>Caulobacterales</taxon>
        <taxon>Caulobacteraceae</taxon>
        <taxon>Phenylobacterium</taxon>
    </lineage>
</organism>
<evidence type="ECO:0000255" key="1">
    <source>
        <dbReference type="HAMAP-Rule" id="MF_00134"/>
    </source>
</evidence>
<sequence>MSDILEKIAAYKRDEVAVRKAAQPTIAPPAEAPRGFRAALTRAHAPGRLALIAEIKKASPSKGLIREDFDPPALARAYEAGGAACLSVLTDGPSFQGDDSYLAAARSAVRLPCLRKEFLVDPWQVAESRSLGADAILVILAMVDDVLAAELMAEAQRLGMDALVEVHDEAEMARAGALGADLIGVNNRNLRTFEVDLSTTERLATMAPAGALLVTESGIFTPADVARLERCGAQAMLVGESLMRQADVTAATRALLG</sequence>
<comment type="catalytic activity">
    <reaction evidence="1">
        <text>1-(2-carboxyphenylamino)-1-deoxy-D-ribulose 5-phosphate + H(+) = (1S,2R)-1-C-(indol-3-yl)glycerol 3-phosphate + CO2 + H2O</text>
        <dbReference type="Rhea" id="RHEA:23476"/>
        <dbReference type="ChEBI" id="CHEBI:15377"/>
        <dbReference type="ChEBI" id="CHEBI:15378"/>
        <dbReference type="ChEBI" id="CHEBI:16526"/>
        <dbReference type="ChEBI" id="CHEBI:58613"/>
        <dbReference type="ChEBI" id="CHEBI:58866"/>
        <dbReference type="EC" id="4.1.1.48"/>
    </reaction>
</comment>
<comment type="pathway">
    <text evidence="1">Amino-acid biosynthesis; L-tryptophan biosynthesis; L-tryptophan from chorismate: step 4/5.</text>
</comment>
<comment type="similarity">
    <text evidence="1">Belongs to the TrpC family.</text>
</comment>
<protein>
    <recommendedName>
        <fullName evidence="1">Indole-3-glycerol phosphate synthase</fullName>
        <shortName evidence="1">IGPS</shortName>
        <ecNumber evidence="1">4.1.1.48</ecNumber>
    </recommendedName>
</protein>
<accession>B4RBX5</accession>